<reference key="1">
    <citation type="journal article" date="2007" name="DNA Res.">
        <title>Complete genomic structure of the bloom-forming toxic cyanobacterium Microcystis aeruginosa NIES-843.</title>
        <authorList>
            <person name="Kaneko T."/>
            <person name="Nakajima N."/>
            <person name="Okamoto S."/>
            <person name="Suzuki I."/>
            <person name="Tanabe Y."/>
            <person name="Tamaoki M."/>
            <person name="Nakamura Y."/>
            <person name="Kasai F."/>
            <person name="Watanabe A."/>
            <person name="Kawashima K."/>
            <person name="Kishida Y."/>
            <person name="Ono A."/>
            <person name="Shimizu Y."/>
            <person name="Takahashi C."/>
            <person name="Minami C."/>
            <person name="Fujishiro T."/>
            <person name="Kohara M."/>
            <person name="Katoh M."/>
            <person name="Nakazaki N."/>
            <person name="Nakayama S."/>
            <person name="Yamada M."/>
            <person name="Tabata S."/>
            <person name="Watanabe M.M."/>
        </authorList>
    </citation>
    <scope>NUCLEOTIDE SEQUENCE [LARGE SCALE GENOMIC DNA]</scope>
    <source>
        <strain>NIES-843 / IAM M-247</strain>
    </source>
</reference>
<accession>B0JVM6</accession>
<gene>
    <name evidence="1" type="primary">miaB</name>
    <name type="ordered locus">MAE_47970</name>
</gene>
<protein>
    <recommendedName>
        <fullName evidence="1">tRNA-2-methylthio-N(6)-dimethylallyladenosine synthase</fullName>
        <ecNumber evidence="1">2.8.4.3</ecNumber>
    </recommendedName>
    <alternativeName>
        <fullName evidence="1">(Dimethylallyl)adenosine tRNA methylthiotransferase MiaB</fullName>
    </alternativeName>
    <alternativeName>
        <fullName evidence="1">tRNA-i(6)A37 methylthiotransferase</fullName>
    </alternativeName>
</protein>
<sequence>MNKSPRRYHITTFGCQMNKADSERMAGILEDLGFQWSEDANEADLILYNTCTIRDNAEQKVYSYLGRQAKRKQTQPDLTLIVAGCVAQQEGEQLLRRVPEVDLIIGPQHANRLGDLLQQVFDGSQVVATEPIHIMEDITKPRRDSNITAWVNVIYGCNERCTYCVVPGVRGVEQSRTPAAIRAEMAQLGQQGYQEITLLGQNIDAYGRDLPGVTASGRHLHNFTDLLYYVHDVAGIERLRFATSHPRYFTERLIKACQELPKVCEHFHIPFQSGDNDILKAMKRGYTQEKYRQIIANIRDLMPDAAISADAIVGFPGETEAQFENTLKLVDEIGFDQLNTAAYSPRPGTPAAIWDDQLSEQVKSDRLQRLNHLVATKAAERSQRYLGRIEEILVEDVNPKDASQVMGRTRGNRLTFFTGDIEELRGKFVKVKITEVRPFSLTGVIF</sequence>
<organism>
    <name type="scientific">Microcystis aeruginosa (strain NIES-843 / IAM M-2473)</name>
    <dbReference type="NCBI Taxonomy" id="449447"/>
    <lineage>
        <taxon>Bacteria</taxon>
        <taxon>Bacillati</taxon>
        <taxon>Cyanobacteriota</taxon>
        <taxon>Cyanophyceae</taxon>
        <taxon>Oscillatoriophycideae</taxon>
        <taxon>Chroococcales</taxon>
        <taxon>Microcystaceae</taxon>
        <taxon>Microcystis</taxon>
    </lineage>
</organism>
<comment type="function">
    <text evidence="1">Catalyzes the methylthiolation of N6-(dimethylallyl)adenosine (i(6)A), leading to the formation of 2-methylthio-N6-(dimethylallyl)adenosine (ms(2)i(6)A) at position 37 in tRNAs that read codons beginning with uridine.</text>
</comment>
<comment type="catalytic activity">
    <reaction evidence="1">
        <text>N(6)-dimethylallyladenosine(37) in tRNA + (sulfur carrier)-SH + AH2 + 2 S-adenosyl-L-methionine = 2-methylsulfanyl-N(6)-dimethylallyladenosine(37) in tRNA + (sulfur carrier)-H + 5'-deoxyadenosine + L-methionine + A + S-adenosyl-L-homocysteine + 2 H(+)</text>
        <dbReference type="Rhea" id="RHEA:37067"/>
        <dbReference type="Rhea" id="RHEA-COMP:10375"/>
        <dbReference type="Rhea" id="RHEA-COMP:10376"/>
        <dbReference type="Rhea" id="RHEA-COMP:14737"/>
        <dbReference type="Rhea" id="RHEA-COMP:14739"/>
        <dbReference type="ChEBI" id="CHEBI:13193"/>
        <dbReference type="ChEBI" id="CHEBI:15378"/>
        <dbReference type="ChEBI" id="CHEBI:17319"/>
        <dbReference type="ChEBI" id="CHEBI:17499"/>
        <dbReference type="ChEBI" id="CHEBI:29917"/>
        <dbReference type="ChEBI" id="CHEBI:57844"/>
        <dbReference type="ChEBI" id="CHEBI:57856"/>
        <dbReference type="ChEBI" id="CHEBI:59789"/>
        <dbReference type="ChEBI" id="CHEBI:64428"/>
        <dbReference type="ChEBI" id="CHEBI:74415"/>
        <dbReference type="ChEBI" id="CHEBI:74417"/>
        <dbReference type="EC" id="2.8.4.3"/>
    </reaction>
</comment>
<comment type="cofactor">
    <cofactor evidence="1">
        <name>[4Fe-4S] cluster</name>
        <dbReference type="ChEBI" id="CHEBI:49883"/>
    </cofactor>
    <text evidence="1">Binds 2 [4Fe-4S] clusters. One cluster is coordinated with 3 cysteines and an exchangeable S-adenosyl-L-methionine.</text>
</comment>
<comment type="subunit">
    <text evidence="1">Monomer.</text>
</comment>
<comment type="subcellular location">
    <subcellularLocation>
        <location evidence="1">Cytoplasm</location>
    </subcellularLocation>
</comment>
<comment type="similarity">
    <text evidence="1">Belongs to the methylthiotransferase family. MiaB subfamily.</text>
</comment>
<evidence type="ECO:0000255" key="1">
    <source>
        <dbReference type="HAMAP-Rule" id="MF_01864"/>
    </source>
</evidence>
<evidence type="ECO:0000255" key="2">
    <source>
        <dbReference type="PROSITE-ProRule" id="PRU01266"/>
    </source>
</evidence>
<proteinExistence type="inferred from homology"/>
<keyword id="KW-0004">4Fe-4S</keyword>
<keyword id="KW-0963">Cytoplasm</keyword>
<keyword id="KW-0408">Iron</keyword>
<keyword id="KW-0411">Iron-sulfur</keyword>
<keyword id="KW-0479">Metal-binding</keyword>
<keyword id="KW-0949">S-adenosyl-L-methionine</keyword>
<keyword id="KW-0808">Transferase</keyword>
<keyword id="KW-0819">tRNA processing</keyword>
<dbReference type="EC" id="2.8.4.3" evidence="1"/>
<dbReference type="EMBL" id="AP009552">
    <property type="protein sequence ID" value="BAG04619.1"/>
    <property type="molecule type" value="Genomic_DNA"/>
</dbReference>
<dbReference type="RefSeq" id="WP_002759326.1">
    <property type="nucleotide sequence ID" value="NC_010296.1"/>
</dbReference>
<dbReference type="SMR" id="B0JVM6"/>
<dbReference type="STRING" id="449447.MAE_47970"/>
<dbReference type="PaxDb" id="449447-MAE_47970"/>
<dbReference type="EnsemblBacteria" id="BAG04619">
    <property type="protein sequence ID" value="BAG04619"/>
    <property type="gene ID" value="MAE_47970"/>
</dbReference>
<dbReference type="KEGG" id="mar:MAE_47970"/>
<dbReference type="eggNOG" id="COG0621">
    <property type="taxonomic scope" value="Bacteria"/>
</dbReference>
<dbReference type="HOGENOM" id="CLU_018697_2_2_3"/>
<dbReference type="BioCyc" id="MAER449447:MAE_RS20830-MONOMER"/>
<dbReference type="Proteomes" id="UP000001510">
    <property type="component" value="Chromosome"/>
</dbReference>
<dbReference type="GO" id="GO:0005737">
    <property type="term" value="C:cytoplasm"/>
    <property type="evidence" value="ECO:0007669"/>
    <property type="project" value="UniProtKB-SubCell"/>
</dbReference>
<dbReference type="GO" id="GO:0051539">
    <property type="term" value="F:4 iron, 4 sulfur cluster binding"/>
    <property type="evidence" value="ECO:0007669"/>
    <property type="project" value="UniProtKB-UniRule"/>
</dbReference>
<dbReference type="GO" id="GO:0046872">
    <property type="term" value="F:metal ion binding"/>
    <property type="evidence" value="ECO:0007669"/>
    <property type="project" value="UniProtKB-KW"/>
</dbReference>
<dbReference type="GO" id="GO:0035596">
    <property type="term" value="F:methylthiotransferase activity"/>
    <property type="evidence" value="ECO:0007669"/>
    <property type="project" value="InterPro"/>
</dbReference>
<dbReference type="GO" id="GO:0035600">
    <property type="term" value="P:tRNA methylthiolation"/>
    <property type="evidence" value="ECO:0007669"/>
    <property type="project" value="TreeGrafter"/>
</dbReference>
<dbReference type="CDD" id="cd01335">
    <property type="entry name" value="Radical_SAM"/>
    <property type="match status" value="1"/>
</dbReference>
<dbReference type="FunFam" id="3.40.50.12160:FF:000006">
    <property type="entry name" value="tRNA-2-methylthio-N(6)-dimethylallyladenosine synthase"/>
    <property type="match status" value="1"/>
</dbReference>
<dbReference type="FunFam" id="3.80.30.20:FF:000001">
    <property type="entry name" value="tRNA-2-methylthio-N(6)-dimethylallyladenosine synthase 2"/>
    <property type="match status" value="1"/>
</dbReference>
<dbReference type="Gene3D" id="3.40.50.12160">
    <property type="entry name" value="Methylthiotransferase, N-terminal domain"/>
    <property type="match status" value="1"/>
</dbReference>
<dbReference type="Gene3D" id="3.80.30.20">
    <property type="entry name" value="tm_1862 like domain"/>
    <property type="match status" value="1"/>
</dbReference>
<dbReference type="HAMAP" id="MF_01864">
    <property type="entry name" value="tRNA_metthiotr_MiaB"/>
    <property type="match status" value="1"/>
</dbReference>
<dbReference type="InterPro" id="IPR006638">
    <property type="entry name" value="Elp3/MiaA/NifB-like_rSAM"/>
</dbReference>
<dbReference type="InterPro" id="IPR005839">
    <property type="entry name" value="Methylthiotransferase"/>
</dbReference>
<dbReference type="InterPro" id="IPR020612">
    <property type="entry name" value="Methylthiotransferase_CS"/>
</dbReference>
<dbReference type="InterPro" id="IPR013848">
    <property type="entry name" value="Methylthiotransferase_N"/>
</dbReference>
<dbReference type="InterPro" id="IPR038135">
    <property type="entry name" value="Methylthiotransferase_N_sf"/>
</dbReference>
<dbReference type="InterPro" id="IPR006463">
    <property type="entry name" value="MiaB_methiolase"/>
</dbReference>
<dbReference type="InterPro" id="IPR007197">
    <property type="entry name" value="rSAM"/>
</dbReference>
<dbReference type="InterPro" id="IPR023404">
    <property type="entry name" value="rSAM_horseshoe"/>
</dbReference>
<dbReference type="InterPro" id="IPR002792">
    <property type="entry name" value="TRAM_dom"/>
</dbReference>
<dbReference type="NCBIfam" id="TIGR01574">
    <property type="entry name" value="miaB-methiolase"/>
    <property type="match status" value="1"/>
</dbReference>
<dbReference type="NCBIfam" id="TIGR00089">
    <property type="entry name" value="MiaB/RimO family radical SAM methylthiotransferase"/>
    <property type="match status" value="1"/>
</dbReference>
<dbReference type="PANTHER" id="PTHR43020">
    <property type="entry name" value="CDK5 REGULATORY SUBUNIT-ASSOCIATED PROTEIN 1"/>
    <property type="match status" value="1"/>
</dbReference>
<dbReference type="PANTHER" id="PTHR43020:SF2">
    <property type="entry name" value="MITOCHONDRIAL TRNA METHYLTHIOTRANSFERASE CDK5RAP1"/>
    <property type="match status" value="1"/>
</dbReference>
<dbReference type="Pfam" id="PF04055">
    <property type="entry name" value="Radical_SAM"/>
    <property type="match status" value="1"/>
</dbReference>
<dbReference type="Pfam" id="PF01938">
    <property type="entry name" value="TRAM"/>
    <property type="match status" value="1"/>
</dbReference>
<dbReference type="Pfam" id="PF00919">
    <property type="entry name" value="UPF0004"/>
    <property type="match status" value="1"/>
</dbReference>
<dbReference type="SFLD" id="SFLDF00273">
    <property type="entry name" value="(dimethylallyl)adenosine_tRNA"/>
    <property type="match status" value="1"/>
</dbReference>
<dbReference type="SFLD" id="SFLDG01082">
    <property type="entry name" value="B12-binding_domain_containing"/>
    <property type="match status" value="1"/>
</dbReference>
<dbReference type="SFLD" id="SFLDS00029">
    <property type="entry name" value="Radical_SAM"/>
    <property type="match status" value="1"/>
</dbReference>
<dbReference type="SMART" id="SM00729">
    <property type="entry name" value="Elp3"/>
    <property type="match status" value="1"/>
</dbReference>
<dbReference type="SUPFAM" id="SSF102114">
    <property type="entry name" value="Radical SAM enzymes"/>
    <property type="match status" value="1"/>
</dbReference>
<dbReference type="PROSITE" id="PS51449">
    <property type="entry name" value="MTTASE_N"/>
    <property type="match status" value="1"/>
</dbReference>
<dbReference type="PROSITE" id="PS01278">
    <property type="entry name" value="MTTASE_RADICAL"/>
    <property type="match status" value="1"/>
</dbReference>
<dbReference type="PROSITE" id="PS51918">
    <property type="entry name" value="RADICAL_SAM"/>
    <property type="match status" value="1"/>
</dbReference>
<dbReference type="PROSITE" id="PS50926">
    <property type="entry name" value="TRAM"/>
    <property type="match status" value="1"/>
</dbReference>
<feature type="chain" id="PRO_0000374382" description="tRNA-2-methylthio-N(6)-dimethylallyladenosine synthase">
    <location>
        <begin position="1"/>
        <end position="446"/>
    </location>
</feature>
<feature type="domain" description="MTTase N-terminal" evidence="1">
    <location>
        <begin position="6"/>
        <end position="122"/>
    </location>
</feature>
<feature type="domain" description="Radical SAM core" evidence="2">
    <location>
        <begin position="143"/>
        <end position="380"/>
    </location>
</feature>
<feature type="domain" description="TRAM" evidence="1">
    <location>
        <begin position="383"/>
        <end position="446"/>
    </location>
</feature>
<feature type="binding site" evidence="1">
    <location>
        <position position="15"/>
    </location>
    <ligand>
        <name>[4Fe-4S] cluster</name>
        <dbReference type="ChEBI" id="CHEBI:49883"/>
        <label>1</label>
    </ligand>
</feature>
<feature type="binding site" evidence="1">
    <location>
        <position position="51"/>
    </location>
    <ligand>
        <name>[4Fe-4S] cluster</name>
        <dbReference type="ChEBI" id="CHEBI:49883"/>
        <label>1</label>
    </ligand>
</feature>
<feature type="binding site" evidence="1">
    <location>
        <position position="85"/>
    </location>
    <ligand>
        <name>[4Fe-4S] cluster</name>
        <dbReference type="ChEBI" id="CHEBI:49883"/>
        <label>1</label>
    </ligand>
</feature>
<feature type="binding site" evidence="1">
    <location>
        <position position="157"/>
    </location>
    <ligand>
        <name>[4Fe-4S] cluster</name>
        <dbReference type="ChEBI" id="CHEBI:49883"/>
        <label>2</label>
        <note>4Fe-4S-S-AdoMet</note>
    </ligand>
</feature>
<feature type="binding site" evidence="1">
    <location>
        <position position="161"/>
    </location>
    <ligand>
        <name>[4Fe-4S] cluster</name>
        <dbReference type="ChEBI" id="CHEBI:49883"/>
        <label>2</label>
        <note>4Fe-4S-S-AdoMet</note>
    </ligand>
</feature>
<feature type="binding site" evidence="1">
    <location>
        <position position="164"/>
    </location>
    <ligand>
        <name>[4Fe-4S] cluster</name>
        <dbReference type="ChEBI" id="CHEBI:49883"/>
        <label>2</label>
        <note>4Fe-4S-S-AdoMet</note>
    </ligand>
</feature>
<name>MIAB_MICAN</name>